<protein>
    <recommendedName>
        <fullName>Probable nuclear hormone receptor HR3</fullName>
        <shortName>mHR3</shortName>
    </recommendedName>
    <alternativeName>
        <fullName>Nuclear receptor subfamily 1 group F member 4</fullName>
    </alternativeName>
</protein>
<keyword id="KW-0238">DNA-binding</keyword>
<keyword id="KW-0479">Metal-binding</keyword>
<keyword id="KW-0539">Nucleus</keyword>
<keyword id="KW-0675">Receptor</keyword>
<keyword id="KW-0804">Transcription</keyword>
<keyword id="KW-0805">Transcription regulation</keyword>
<keyword id="KW-0862">Zinc</keyword>
<keyword id="KW-0863">Zinc-finger</keyword>
<comment type="function">
    <text>Putative receptor whose ligand is not yet known.</text>
</comment>
<comment type="subcellular location">
    <subcellularLocation>
        <location evidence="1">Nucleus</location>
    </subcellularLocation>
</comment>
<comment type="similarity">
    <text evidence="4">Belongs to the nuclear hormone receptor family. NR1 subfamily.</text>
</comment>
<organism>
    <name type="scientific">Manduca sexta</name>
    <name type="common">Tobacco hawkmoth</name>
    <name type="synonym">Tobacco hornworm</name>
    <dbReference type="NCBI Taxonomy" id="7130"/>
    <lineage>
        <taxon>Eukaryota</taxon>
        <taxon>Metazoa</taxon>
        <taxon>Ecdysozoa</taxon>
        <taxon>Arthropoda</taxon>
        <taxon>Hexapoda</taxon>
        <taxon>Insecta</taxon>
        <taxon>Pterygota</taxon>
        <taxon>Neoptera</taxon>
        <taxon>Endopterygota</taxon>
        <taxon>Lepidoptera</taxon>
        <taxon>Glossata</taxon>
        <taxon>Ditrysia</taxon>
        <taxon>Bombycoidea</taxon>
        <taxon>Sphingidae</taxon>
        <taxon>Sphinginae</taxon>
        <taxon>Sphingini</taxon>
        <taxon>Manduca</taxon>
    </lineage>
</organism>
<proteinExistence type="evidence at transcript level"/>
<name>HR3_MANSE</name>
<evidence type="ECO:0000255" key="1">
    <source>
        <dbReference type="PROSITE-ProRule" id="PRU00407"/>
    </source>
</evidence>
<evidence type="ECO:0000255" key="2">
    <source>
        <dbReference type="PROSITE-ProRule" id="PRU01189"/>
    </source>
</evidence>
<evidence type="ECO:0000256" key="3">
    <source>
        <dbReference type="SAM" id="MobiDB-lite"/>
    </source>
</evidence>
<evidence type="ECO:0000305" key="4"/>
<gene>
    <name type="primary">HR3</name>
    <name type="synonym">NR1F4</name>
</gene>
<reference key="1">
    <citation type="journal article" date="1992" name="Dev. Biol.">
        <title>An ecdysteroid-inducible Manduca gene similar to the Drosophila DHR3 gene, a member of the steroid hormone receptor superfamily.</title>
        <authorList>
            <person name="Palli S.R."/>
            <person name="Hiruma K."/>
            <person name="Riddiford L.M."/>
        </authorList>
    </citation>
    <scope>NUCLEOTIDE SEQUENCE [MRNA]</scope>
</reference>
<feature type="chain" id="PRO_0000053521" description="Probable nuclear hormone receptor HR3">
    <location>
        <begin position="1"/>
        <end position="548"/>
    </location>
</feature>
<feature type="domain" description="NR LBD" evidence="2">
    <location>
        <begin position="295"/>
        <end position="539"/>
    </location>
</feature>
<feature type="DNA-binding region" description="Nuclear receptor" evidence="1">
    <location>
        <begin position="101"/>
        <end position="176"/>
    </location>
</feature>
<feature type="zinc finger region" description="NR C4-type" evidence="1">
    <location>
        <begin position="104"/>
        <end position="124"/>
    </location>
</feature>
<feature type="zinc finger region" description="NR C4-type" evidence="1">
    <location>
        <begin position="140"/>
        <end position="164"/>
    </location>
</feature>
<feature type="region of interest" description="Disordered" evidence="3">
    <location>
        <begin position="1"/>
        <end position="27"/>
    </location>
</feature>
<feature type="region of interest" description="Disordered" evidence="3">
    <location>
        <begin position="198"/>
        <end position="228"/>
    </location>
</feature>
<feature type="compositionally biased region" description="Polar residues" evidence="3">
    <location>
        <begin position="211"/>
        <end position="222"/>
    </location>
</feature>
<accession>Q08882</accession>
<dbReference type="EMBL" id="X74566">
    <property type="protein sequence ID" value="CAA52654.1"/>
    <property type="molecule type" value="mRNA"/>
</dbReference>
<dbReference type="SMR" id="Q08882"/>
<dbReference type="OrthoDB" id="8832025at2759"/>
<dbReference type="GO" id="GO:0005634">
    <property type="term" value="C:nucleus"/>
    <property type="evidence" value="ECO:0007669"/>
    <property type="project" value="UniProtKB-SubCell"/>
</dbReference>
<dbReference type="GO" id="GO:0004879">
    <property type="term" value="F:nuclear receptor activity"/>
    <property type="evidence" value="ECO:0007669"/>
    <property type="project" value="InterPro"/>
</dbReference>
<dbReference type="GO" id="GO:0000978">
    <property type="term" value="F:RNA polymerase II cis-regulatory region sequence-specific DNA binding"/>
    <property type="evidence" value="ECO:0007669"/>
    <property type="project" value="TreeGrafter"/>
</dbReference>
<dbReference type="GO" id="GO:0008270">
    <property type="term" value="F:zinc ion binding"/>
    <property type="evidence" value="ECO:0007669"/>
    <property type="project" value="UniProtKB-KW"/>
</dbReference>
<dbReference type="CDD" id="cd06968">
    <property type="entry name" value="NR_DBD_ROR"/>
    <property type="match status" value="1"/>
</dbReference>
<dbReference type="FunFam" id="3.30.50.10:FF:000003">
    <property type="entry name" value="Nuclear orphan receptor ROR-beta"/>
    <property type="match status" value="1"/>
</dbReference>
<dbReference type="Gene3D" id="3.30.50.10">
    <property type="entry name" value="Erythroid Transcription Factor GATA-1, subunit A"/>
    <property type="match status" value="1"/>
</dbReference>
<dbReference type="Gene3D" id="1.10.565.10">
    <property type="entry name" value="Retinoid X Receptor"/>
    <property type="match status" value="1"/>
</dbReference>
<dbReference type="InterPro" id="IPR035500">
    <property type="entry name" value="NHR-like_dom_sf"/>
</dbReference>
<dbReference type="InterPro" id="IPR044101">
    <property type="entry name" value="NR_DBD_ROR"/>
</dbReference>
<dbReference type="InterPro" id="IPR000536">
    <property type="entry name" value="Nucl_hrmn_rcpt_lig-bd"/>
</dbReference>
<dbReference type="InterPro" id="IPR001723">
    <property type="entry name" value="Nuclear_hrmn_rcpt"/>
</dbReference>
<dbReference type="InterPro" id="IPR001728">
    <property type="entry name" value="ThyrH_rcpt"/>
</dbReference>
<dbReference type="InterPro" id="IPR001628">
    <property type="entry name" value="Znf_hrmn_rcpt"/>
</dbReference>
<dbReference type="InterPro" id="IPR013088">
    <property type="entry name" value="Znf_NHR/GATA"/>
</dbReference>
<dbReference type="PANTHER" id="PTHR45805">
    <property type="entry name" value="NUCLEAR HORMONE RECEPTOR HR3-RELATED"/>
    <property type="match status" value="1"/>
</dbReference>
<dbReference type="PANTHER" id="PTHR45805:SF2">
    <property type="entry name" value="NUCLEAR HORMONE RECEPTOR HR3-RELATED"/>
    <property type="match status" value="1"/>
</dbReference>
<dbReference type="Pfam" id="PF00104">
    <property type="entry name" value="Hormone_recep"/>
    <property type="match status" value="1"/>
</dbReference>
<dbReference type="Pfam" id="PF00105">
    <property type="entry name" value="zf-C4"/>
    <property type="match status" value="1"/>
</dbReference>
<dbReference type="PRINTS" id="PR00398">
    <property type="entry name" value="STRDHORMONER"/>
</dbReference>
<dbReference type="PRINTS" id="PR00047">
    <property type="entry name" value="STROIDFINGER"/>
</dbReference>
<dbReference type="PRINTS" id="PR00546">
    <property type="entry name" value="THYROIDHORMR"/>
</dbReference>
<dbReference type="SMART" id="SM00430">
    <property type="entry name" value="HOLI"/>
    <property type="match status" value="1"/>
</dbReference>
<dbReference type="SMART" id="SM00399">
    <property type="entry name" value="ZnF_C4"/>
    <property type="match status" value="1"/>
</dbReference>
<dbReference type="SUPFAM" id="SSF57716">
    <property type="entry name" value="Glucocorticoid receptor-like (DNA-binding domain)"/>
    <property type="match status" value="1"/>
</dbReference>
<dbReference type="SUPFAM" id="SSF48508">
    <property type="entry name" value="Nuclear receptor ligand-binding domain"/>
    <property type="match status" value="1"/>
</dbReference>
<dbReference type="PROSITE" id="PS51843">
    <property type="entry name" value="NR_LBD"/>
    <property type="match status" value="1"/>
</dbReference>
<dbReference type="PROSITE" id="PS00031">
    <property type="entry name" value="NUCLEAR_REC_DBD_1"/>
    <property type="match status" value="1"/>
</dbReference>
<dbReference type="PROSITE" id="PS51030">
    <property type="entry name" value="NUCLEAR_REC_DBD_2"/>
    <property type="match status" value="1"/>
</dbReference>
<sequence>MNNNQFHELFGSQWPPDQHGGHSSASTMLHQQTMPQTMQLKREPHTEVGVMHNQMGMDITSGSVADSTSPPPGSSEGMFGPISGMFMDKKAANSIRAQIEIIPCKVCGDKSSGVHYGVITCEGCKGFFRRSQSTVVNYQCPRNKACVVDRVNRNRCQYCRLQKCLKLGMSRDAVKFGRMSKKQREKVEDEVRYHKAQMRAQNDAAPDSVYDAQQQTPSSSDQFHGHYNGYPGYASPLSSYGYNNAGPPLTSNMSSIQAQPQAQQPYDYADSTTTYEPKQPGYLDADFIGQVEGDISKVLVKSLAERHANTNPKLEYINEMFSKPQDVSKLLFYNSMTYEEMWLDCADKLTAMIQNIIEFAKLIPGFMKLTQDDQILLLKSGSFELAIVRLSRLIDVNREQVLYGDVVLPIRECVHARDPRDMALVSGIFEAAKSIARLKLTESELALYQSLVLLWPERHGVMGNTEIRCLFNMSMSAMRHEIEANHAPLKGDVTVLDTLLAKIPTFRELSLMHLGALSRFKMTHPHHVFPALYKELFSLDSVLDYTHG</sequence>